<evidence type="ECO:0000255" key="1">
    <source>
        <dbReference type="HAMAP-Rule" id="MF_01511"/>
    </source>
</evidence>
<gene>
    <name evidence="1" type="primary">guaC</name>
    <name type="ordered locus">OB1310</name>
</gene>
<dbReference type="EC" id="1.7.1.7" evidence="1"/>
<dbReference type="EMBL" id="BA000028">
    <property type="protein sequence ID" value="BAC13266.1"/>
    <property type="molecule type" value="Genomic_DNA"/>
</dbReference>
<dbReference type="RefSeq" id="WP_011065714.1">
    <property type="nucleotide sequence ID" value="NC_004193.1"/>
</dbReference>
<dbReference type="SMR" id="Q8ERJ2"/>
<dbReference type="STRING" id="221109.gene:10733550"/>
<dbReference type="KEGG" id="oih:OB1310"/>
<dbReference type="eggNOG" id="COG0516">
    <property type="taxonomic scope" value="Bacteria"/>
</dbReference>
<dbReference type="HOGENOM" id="CLU_022552_5_0_9"/>
<dbReference type="OrthoDB" id="9805398at2"/>
<dbReference type="PhylomeDB" id="Q8ERJ2"/>
<dbReference type="Proteomes" id="UP000000822">
    <property type="component" value="Chromosome"/>
</dbReference>
<dbReference type="GO" id="GO:0005829">
    <property type="term" value="C:cytosol"/>
    <property type="evidence" value="ECO:0007669"/>
    <property type="project" value="TreeGrafter"/>
</dbReference>
<dbReference type="GO" id="GO:1902560">
    <property type="term" value="C:GMP reductase complex"/>
    <property type="evidence" value="ECO:0007669"/>
    <property type="project" value="InterPro"/>
</dbReference>
<dbReference type="GO" id="GO:0003920">
    <property type="term" value="F:GMP reductase activity"/>
    <property type="evidence" value="ECO:0007669"/>
    <property type="project" value="UniProtKB-UniRule"/>
</dbReference>
<dbReference type="GO" id="GO:0006163">
    <property type="term" value="P:purine nucleotide metabolic process"/>
    <property type="evidence" value="ECO:0007669"/>
    <property type="project" value="UniProtKB-UniRule"/>
</dbReference>
<dbReference type="CDD" id="cd00381">
    <property type="entry name" value="IMPDH"/>
    <property type="match status" value="1"/>
</dbReference>
<dbReference type="FunFam" id="3.20.20.70:FF:000079">
    <property type="entry name" value="GMP reductase"/>
    <property type="match status" value="1"/>
</dbReference>
<dbReference type="Gene3D" id="3.20.20.70">
    <property type="entry name" value="Aldolase class I"/>
    <property type="match status" value="1"/>
</dbReference>
<dbReference type="HAMAP" id="MF_01511">
    <property type="entry name" value="GMP_reduct_type2"/>
    <property type="match status" value="1"/>
</dbReference>
<dbReference type="InterPro" id="IPR013785">
    <property type="entry name" value="Aldolase_TIM"/>
</dbReference>
<dbReference type="InterPro" id="IPR050139">
    <property type="entry name" value="GMP_reductase"/>
</dbReference>
<dbReference type="InterPro" id="IPR005994">
    <property type="entry name" value="GuaC_type_2"/>
</dbReference>
<dbReference type="InterPro" id="IPR015875">
    <property type="entry name" value="IMP_DH/GMP_Rdtase_CS"/>
</dbReference>
<dbReference type="InterPro" id="IPR001093">
    <property type="entry name" value="IMP_DH_GMPRt"/>
</dbReference>
<dbReference type="NCBIfam" id="TIGR01306">
    <property type="entry name" value="GMP_reduct_2"/>
    <property type="match status" value="1"/>
</dbReference>
<dbReference type="NCBIfam" id="NF003966">
    <property type="entry name" value="PRK05458.1"/>
    <property type="match status" value="1"/>
</dbReference>
<dbReference type="PANTHER" id="PTHR43170">
    <property type="entry name" value="GMP REDUCTASE"/>
    <property type="match status" value="1"/>
</dbReference>
<dbReference type="PANTHER" id="PTHR43170:SF5">
    <property type="entry name" value="GMP REDUCTASE"/>
    <property type="match status" value="1"/>
</dbReference>
<dbReference type="Pfam" id="PF00478">
    <property type="entry name" value="IMPDH"/>
    <property type="match status" value="1"/>
</dbReference>
<dbReference type="PIRSF" id="PIRSF036500">
    <property type="entry name" value="GMP_red_Firmic"/>
    <property type="match status" value="1"/>
</dbReference>
<dbReference type="SMART" id="SM01240">
    <property type="entry name" value="IMPDH"/>
    <property type="match status" value="1"/>
</dbReference>
<dbReference type="SUPFAM" id="SSF51412">
    <property type="entry name" value="Inosine monophosphate dehydrogenase (IMPDH)"/>
    <property type="match status" value="1"/>
</dbReference>
<dbReference type="PROSITE" id="PS00487">
    <property type="entry name" value="IMP_DH_GMP_RED"/>
    <property type="match status" value="1"/>
</dbReference>
<protein>
    <recommendedName>
        <fullName evidence="1">GMP reductase</fullName>
        <ecNumber evidence="1">1.7.1.7</ecNumber>
    </recommendedName>
    <alternativeName>
        <fullName evidence="1">Guanosine 5'-monophosphate oxidoreductase</fullName>
        <shortName evidence="1">Guanosine monophosphate reductase</shortName>
    </alternativeName>
</protein>
<name>GUAC_OCEIH</name>
<proteinExistence type="inferred from homology"/>
<organism>
    <name type="scientific">Oceanobacillus iheyensis (strain DSM 14371 / CIP 107618 / JCM 11309 / KCTC 3954 / HTE831)</name>
    <dbReference type="NCBI Taxonomy" id="221109"/>
    <lineage>
        <taxon>Bacteria</taxon>
        <taxon>Bacillati</taxon>
        <taxon>Bacillota</taxon>
        <taxon>Bacilli</taxon>
        <taxon>Bacillales</taxon>
        <taxon>Bacillaceae</taxon>
        <taxon>Oceanobacillus</taxon>
    </lineage>
</organism>
<feature type="chain" id="PRO_0000093762" description="GMP reductase">
    <location>
        <begin position="1"/>
        <end position="327"/>
    </location>
</feature>
<feature type="active site" description="Thioimidate intermediate" evidence="1">
    <location>
        <position position="175"/>
    </location>
</feature>
<feature type="binding site" evidence="1">
    <location>
        <begin position="204"/>
        <end position="227"/>
    </location>
    <ligand>
        <name>NADP(+)</name>
        <dbReference type="ChEBI" id="CHEBI:58349"/>
    </ligand>
</feature>
<keyword id="KW-0521">NADP</keyword>
<keyword id="KW-0560">Oxidoreductase</keyword>
<keyword id="KW-1185">Reference proteome</keyword>
<sequence>MENVFDYEDIQLIPAKCVVNSRSECDTSVTLGNRTFKLPVVPANMQTIIDEKIAKYLAEKNYFYIMHRFEPEKRIDFIQDMQEYNLFTSISVGVKEEEYTFIEDLAAKQLIPDYITIDIAHGHSDAVIKMIKHIKNNLPSSFVIAGNVGTPEAVRELENAGADATKVGIGPGKVCITKIKTGFGTGGWQLAALRWCAKAASKPIIADGGIRTHGDIAKSIRFGASMVMIGSLFAGHEESPGETIEQDGKKIKEYFGSASEFQKGEKKNVEGKKMYVEHKGPLQDTLTEMEQDLQSSISYAGGKQLDAIRNVDYVVVKNSIFNGDKVF</sequence>
<reference key="1">
    <citation type="journal article" date="2002" name="Nucleic Acids Res.">
        <title>Genome sequence of Oceanobacillus iheyensis isolated from the Iheya Ridge and its unexpected adaptive capabilities to extreme environments.</title>
        <authorList>
            <person name="Takami H."/>
            <person name="Takaki Y."/>
            <person name="Uchiyama I."/>
        </authorList>
    </citation>
    <scope>NUCLEOTIDE SEQUENCE [LARGE SCALE GENOMIC DNA]</scope>
    <source>
        <strain>DSM 14371 / CIP 107618 / JCM 11309 / KCTC 3954 / HTE831</strain>
    </source>
</reference>
<comment type="function">
    <text evidence="1">Catalyzes the irreversible NADPH-dependent deamination of GMP to IMP. It functions in the conversion of nucleobase, nucleoside and nucleotide derivatives of G to A nucleotides, and in maintaining the intracellular balance of A and G nucleotides.</text>
</comment>
<comment type="catalytic activity">
    <reaction evidence="1">
        <text>IMP + NH4(+) + NADP(+) = GMP + NADPH + 2 H(+)</text>
        <dbReference type="Rhea" id="RHEA:17185"/>
        <dbReference type="ChEBI" id="CHEBI:15378"/>
        <dbReference type="ChEBI" id="CHEBI:28938"/>
        <dbReference type="ChEBI" id="CHEBI:57783"/>
        <dbReference type="ChEBI" id="CHEBI:58053"/>
        <dbReference type="ChEBI" id="CHEBI:58115"/>
        <dbReference type="ChEBI" id="CHEBI:58349"/>
        <dbReference type="EC" id="1.7.1.7"/>
    </reaction>
</comment>
<comment type="similarity">
    <text evidence="1">Belongs to the IMPDH/GMPR family. GuaC type 2 subfamily.</text>
</comment>
<accession>Q8ERJ2</accession>